<comment type="function">
    <text evidence="1">Involved in the cleavage of the C1-C2 bond of 3D-(3,5/4)-trihydroxycyclohexane-1,2-dione (THcHDO) to yield 5-deoxy-glucuronate (5DG).</text>
</comment>
<comment type="catalytic activity">
    <reaction evidence="1">
        <text>3D-3,5/4-trihydroxycyclohexane-1,2-dione + H2O = 5-deoxy-D-glucuronate + H(+)</text>
        <dbReference type="Rhea" id="RHEA:25836"/>
        <dbReference type="ChEBI" id="CHEBI:15377"/>
        <dbReference type="ChEBI" id="CHEBI:15378"/>
        <dbReference type="ChEBI" id="CHEBI:28446"/>
        <dbReference type="ChEBI" id="CHEBI:58852"/>
        <dbReference type="EC" id="3.7.1.22"/>
    </reaction>
</comment>
<comment type="cofactor">
    <cofactor evidence="1">
        <name>Mg(2+)</name>
        <dbReference type="ChEBI" id="CHEBI:18420"/>
    </cofactor>
    <text evidence="1">Binds 1 Mg(2+) ion per subunit.</text>
</comment>
<comment type="cofactor">
    <cofactor evidence="1">
        <name>thiamine diphosphate</name>
        <dbReference type="ChEBI" id="CHEBI:58937"/>
    </cofactor>
    <text evidence="1">Binds 1 thiamine pyrophosphate per subunit.</text>
</comment>
<comment type="pathway">
    <text evidence="1">Polyol metabolism; myo-inositol degradation into acetyl-CoA; acetyl-CoA from myo-inositol: step 3/7.</text>
</comment>
<comment type="similarity">
    <text evidence="1">Belongs to the TPP enzyme family.</text>
</comment>
<comment type="sequence caution" evidence="2">
    <conflict type="erroneous initiation">
        <sequence resource="EMBL-CDS" id="AAO35133"/>
    </conflict>
</comment>
<feature type="chain" id="PRO_0000352541" description="3D-(3,5/4)-trihydroxycyclohexane-1,2-dione hydrolase">
    <location>
        <begin position="1"/>
        <end position="644"/>
    </location>
</feature>
<feature type="region of interest" description="Thiamine pyrophosphate binding" evidence="1">
    <location>
        <begin position="442"/>
        <end position="522"/>
    </location>
</feature>
<feature type="binding site" evidence="1">
    <location>
        <position position="65"/>
    </location>
    <ligand>
        <name>thiamine diphosphate</name>
        <dbReference type="ChEBI" id="CHEBI:58937"/>
    </ligand>
</feature>
<feature type="binding site" evidence="1">
    <location>
        <position position="493"/>
    </location>
    <ligand>
        <name>Mg(2+)</name>
        <dbReference type="ChEBI" id="CHEBI:18420"/>
    </ligand>
</feature>
<feature type="binding site" evidence="1">
    <location>
        <position position="520"/>
    </location>
    <ligand>
        <name>Mg(2+)</name>
        <dbReference type="ChEBI" id="CHEBI:18420"/>
    </ligand>
</feature>
<dbReference type="EC" id="3.7.1.22" evidence="1"/>
<dbReference type="EMBL" id="AE015927">
    <property type="protein sequence ID" value="AAO35133.1"/>
    <property type="status" value="ALT_INIT"/>
    <property type="molecule type" value="Genomic_DNA"/>
</dbReference>
<dbReference type="RefSeq" id="WP_035124721.1">
    <property type="nucleotide sequence ID" value="NC_004557.1"/>
</dbReference>
<dbReference type="SMR" id="Q898E8"/>
<dbReference type="STRING" id="212717.CTC_00510"/>
<dbReference type="GeneID" id="24253396"/>
<dbReference type="KEGG" id="ctc:CTC_00510"/>
<dbReference type="HOGENOM" id="CLU_013748_6_0_9"/>
<dbReference type="OrthoDB" id="4494979at2"/>
<dbReference type="UniPathway" id="UPA00076">
    <property type="reaction ID" value="UER00145"/>
</dbReference>
<dbReference type="Proteomes" id="UP000001412">
    <property type="component" value="Chromosome"/>
</dbReference>
<dbReference type="GO" id="GO:0005948">
    <property type="term" value="C:acetolactate synthase complex"/>
    <property type="evidence" value="ECO:0007669"/>
    <property type="project" value="TreeGrafter"/>
</dbReference>
<dbReference type="GO" id="GO:0102481">
    <property type="term" value="F:3D-(3,5/4)-trihydroxycyclohexane-1,2-dione hydrolase activity"/>
    <property type="evidence" value="ECO:0007669"/>
    <property type="project" value="UniProtKB-EC"/>
</dbReference>
<dbReference type="GO" id="GO:0003984">
    <property type="term" value="F:acetolactate synthase activity"/>
    <property type="evidence" value="ECO:0007669"/>
    <property type="project" value="TreeGrafter"/>
</dbReference>
<dbReference type="GO" id="GO:0050660">
    <property type="term" value="F:flavin adenine dinucleotide binding"/>
    <property type="evidence" value="ECO:0007669"/>
    <property type="project" value="TreeGrafter"/>
</dbReference>
<dbReference type="GO" id="GO:0000287">
    <property type="term" value="F:magnesium ion binding"/>
    <property type="evidence" value="ECO:0007669"/>
    <property type="project" value="UniProtKB-UniRule"/>
</dbReference>
<dbReference type="GO" id="GO:0030976">
    <property type="term" value="F:thiamine pyrophosphate binding"/>
    <property type="evidence" value="ECO:0007669"/>
    <property type="project" value="UniProtKB-UniRule"/>
</dbReference>
<dbReference type="GO" id="GO:0019310">
    <property type="term" value="P:inositol catabolic process"/>
    <property type="evidence" value="ECO:0007669"/>
    <property type="project" value="UniProtKB-UniRule"/>
</dbReference>
<dbReference type="GO" id="GO:0009097">
    <property type="term" value="P:isoleucine biosynthetic process"/>
    <property type="evidence" value="ECO:0007669"/>
    <property type="project" value="TreeGrafter"/>
</dbReference>
<dbReference type="GO" id="GO:0009099">
    <property type="term" value="P:L-valine biosynthetic process"/>
    <property type="evidence" value="ECO:0007669"/>
    <property type="project" value="TreeGrafter"/>
</dbReference>
<dbReference type="CDD" id="cd02003">
    <property type="entry name" value="TPP_IolD"/>
    <property type="match status" value="1"/>
</dbReference>
<dbReference type="CDD" id="cd07035">
    <property type="entry name" value="TPP_PYR_POX_like"/>
    <property type="match status" value="1"/>
</dbReference>
<dbReference type="Gene3D" id="3.40.50.970">
    <property type="match status" value="2"/>
</dbReference>
<dbReference type="Gene3D" id="3.40.50.1220">
    <property type="entry name" value="TPP-binding domain"/>
    <property type="match status" value="1"/>
</dbReference>
<dbReference type="HAMAP" id="MF_01669">
    <property type="entry name" value="IolD"/>
    <property type="match status" value="1"/>
</dbReference>
<dbReference type="InterPro" id="IPR029035">
    <property type="entry name" value="DHS-like_NAD/FAD-binding_dom"/>
</dbReference>
<dbReference type="InterPro" id="IPR030817">
    <property type="entry name" value="Myo_inos_IolD"/>
</dbReference>
<dbReference type="InterPro" id="IPR023757">
    <property type="entry name" value="THcHDO_hydrolase_firmi"/>
</dbReference>
<dbReference type="InterPro" id="IPR029061">
    <property type="entry name" value="THDP-binding"/>
</dbReference>
<dbReference type="InterPro" id="IPR012000">
    <property type="entry name" value="Thiamin_PyroP_enz_cen_dom"/>
</dbReference>
<dbReference type="InterPro" id="IPR012001">
    <property type="entry name" value="Thiamin_PyroP_enz_TPP-bd_dom"/>
</dbReference>
<dbReference type="InterPro" id="IPR045229">
    <property type="entry name" value="TPP_enz"/>
</dbReference>
<dbReference type="InterPro" id="IPR011766">
    <property type="entry name" value="TPP_enzyme_TPP-bd"/>
</dbReference>
<dbReference type="NCBIfam" id="TIGR04377">
    <property type="entry name" value="myo_inos_iolD"/>
    <property type="match status" value="1"/>
</dbReference>
<dbReference type="PANTHER" id="PTHR18968:SF9">
    <property type="entry name" value="3D-(3,5_4)-TRIHYDROXYCYCLOHEXANE-1,2-DIONE HYDROLASE"/>
    <property type="match status" value="1"/>
</dbReference>
<dbReference type="PANTHER" id="PTHR18968">
    <property type="entry name" value="THIAMINE PYROPHOSPHATE ENZYMES"/>
    <property type="match status" value="1"/>
</dbReference>
<dbReference type="Pfam" id="PF02775">
    <property type="entry name" value="TPP_enzyme_C"/>
    <property type="match status" value="1"/>
</dbReference>
<dbReference type="Pfam" id="PF00205">
    <property type="entry name" value="TPP_enzyme_M"/>
    <property type="match status" value="1"/>
</dbReference>
<dbReference type="Pfam" id="PF02776">
    <property type="entry name" value="TPP_enzyme_N"/>
    <property type="match status" value="1"/>
</dbReference>
<dbReference type="SUPFAM" id="SSF52467">
    <property type="entry name" value="DHS-like NAD/FAD-binding domain"/>
    <property type="match status" value="1"/>
</dbReference>
<dbReference type="SUPFAM" id="SSF52518">
    <property type="entry name" value="Thiamin diphosphate-binding fold (THDP-binding)"/>
    <property type="match status" value="2"/>
</dbReference>
<proteinExistence type="inferred from homology"/>
<gene>
    <name evidence="1" type="primary">iolD</name>
    <name type="ordered locus">CTC_00510</name>
</gene>
<reference key="1">
    <citation type="journal article" date="2003" name="Proc. Natl. Acad. Sci. U.S.A.">
        <title>The genome sequence of Clostridium tetani, the causative agent of tetanus disease.</title>
        <authorList>
            <person name="Brueggemann H."/>
            <person name="Baeumer S."/>
            <person name="Fricke W.F."/>
            <person name="Wiezer A."/>
            <person name="Liesegang H."/>
            <person name="Decker I."/>
            <person name="Herzberg C."/>
            <person name="Martinez-Arias R."/>
            <person name="Merkl R."/>
            <person name="Henne A."/>
            <person name="Gottschalk G."/>
        </authorList>
    </citation>
    <scope>NUCLEOTIDE SEQUENCE [LARGE SCALE GENOMIC DNA]</scope>
    <source>
        <strain>Massachusetts / E88</strain>
    </source>
</reference>
<evidence type="ECO:0000255" key="1">
    <source>
        <dbReference type="HAMAP-Rule" id="MF_01669"/>
    </source>
</evidence>
<evidence type="ECO:0000305" key="2"/>
<name>IOLD_CLOTE</name>
<protein>
    <recommendedName>
        <fullName evidence="1">3D-(3,5/4)-trihydroxycyclohexane-1,2-dione hydrolase</fullName>
        <shortName evidence="1">THcHDO hydrolase</shortName>
        <ecNumber evidence="1">3.7.1.22</ecNumber>
    </recommendedName>
</protein>
<sequence>METIKITTAQALIKFLNQQYVELDGQEYRFVQGIFTIFGHGNVLGIGQALEEDPGHLEVYQGHNEQGMAQSAIAFAKQSNRKQIYACTSSVGPGAANMVTAAATATANNIPVLLLPGDTFSTRQPDPVLQQVEQTYNLSITTNDAFKAVSKYWDRVNRPEQLMTAMINAMRVLTDPANTGAVTIALPQDVQGEIYDFPEYFFKKRVHRIERTPPSKQAIEDAVELIKRKKKPLIICGGGVRYSEAAESLKRFSEKFNIPFGETQAGKSAIEWSYGLNLGGIGVTGNSAANSIAKDADLIIGVGTRFTDFTTCSKFLFQNDDVEFLTINISSFHANKLDALKVISDAKVGLDTIANELERQGYSSDYEDEIKKAKNEWEKELNRLFNIEYTEKEFVPEIAGHCDKVVEEFYKEFDSCLTQTKVLGELNELLDDDAIVIGASGSLPGDLHKVWCPKRSNTYHMEYGYSCMGYEVSAALGVKLAEEDKEVYSLVGDGAYLMLHSELITSIKEGKKINILLFDNAGFGCINNLQMSNGMGSFATEFRHRNSETGKLDGKLLKIDFAKSAEGYGVKTYKVNTIDKLRYAIEDSKKQKISTLIDIKILPKTMTRGYESWWHVGVSEKSKNPKINKAYESKINHLAKARKY</sequence>
<keyword id="KW-0378">Hydrolase</keyword>
<keyword id="KW-0460">Magnesium</keyword>
<keyword id="KW-0479">Metal-binding</keyword>
<keyword id="KW-0520">NAD</keyword>
<keyword id="KW-1185">Reference proteome</keyword>
<keyword id="KW-0786">Thiamine pyrophosphate</keyword>
<organism>
    <name type="scientific">Clostridium tetani (strain Massachusetts / E88)</name>
    <dbReference type="NCBI Taxonomy" id="212717"/>
    <lineage>
        <taxon>Bacteria</taxon>
        <taxon>Bacillati</taxon>
        <taxon>Bacillota</taxon>
        <taxon>Clostridia</taxon>
        <taxon>Eubacteriales</taxon>
        <taxon>Clostridiaceae</taxon>
        <taxon>Clostridium</taxon>
    </lineage>
</organism>
<accession>Q898E8</accession>